<gene>
    <name type="primary">tmem82</name>
</gene>
<accession>B0BMG8</accession>
<dbReference type="EMBL" id="BC158423">
    <property type="protein sequence ID" value="AAI58424.1"/>
    <property type="molecule type" value="mRNA"/>
</dbReference>
<dbReference type="RefSeq" id="NP_001016278.2">
    <property type="nucleotide sequence ID" value="NM_001016278.3"/>
</dbReference>
<dbReference type="FunCoup" id="B0BMG8">
    <property type="interactions" value="3"/>
</dbReference>
<dbReference type="STRING" id="8364.ENSXETP00000033542"/>
<dbReference type="PaxDb" id="8364-ENSXETP00000054433"/>
<dbReference type="GeneID" id="549032"/>
<dbReference type="KEGG" id="xtr:549032"/>
<dbReference type="AGR" id="Xenbase:XB-GENE-5916313"/>
<dbReference type="CTD" id="388595"/>
<dbReference type="Xenbase" id="XB-GENE-5916313">
    <property type="gene designation" value="tmem82"/>
</dbReference>
<dbReference type="eggNOG" id="ENOG502QVH3">
    <property type="taxonomic scope" value="Eukaryota"/>
</dbReference>
<dbReference type="InParanoid" id="B0BMG8"/>
<dbReference type="OMA" id="HVCQLYE"/>
<dbReference type="OrthoDB" id="9943056at2759"/>
<dbReference type="Proteomes" id="UP000008143">
    <property type="component" value="Unplaced"/>
</dbReference>
<dbReference type="GO" id="GO:0016020">
    <property type="term" value="C:membrane"/>
    <property type="evidence" value="ECO:0007669"/>
    <property type="project" value="UniProtKB-SubCell"/>
</dbReference>
<dbReference type="InterPro" id="IPR031648">
    <property type="entry name" value="TMEM82"/>
</dbReference>
<dbReference type="PANTHER" id="PTHR35257">
    <property type="entry name" value="TRANSMEMBRANE PROTEIN 82"/>
    <property type="match status" value="1"/>
</dbReference>
<dbReference type="PANTHER" id="PTHR35257:SF1">
    <property type="entry name" value="TRANSMEMBRANE PROTEIN 82"/>
    <property type="match status" value="1"/>
</dbReference>
<dbReference type="Pfam" id="PF15816">
    <property type="entry name" value="TMEM82"/>
    <property type="match status" value="1"/>
</dbReference>
<reference key="1">
    <citation type="submission" date="2008-01" db="EMBL/GenBank/DDBJ databases">
        <authorList>
            <consortium name="NIH - Xenopus Gene Collection (XGC) project"/>
        </authorList>
    </citation>
    <scope>NUCLEOTIDE SEQUENCE [LARGE SCALE MRNA]</scope>
    <source>
        <tissue>Embryo</tissue>
    </source>
</reference>
<feature type="chain" id="PRO_0000365328" description="Transmembrane protein 82">
    <location>
        <begin position="1"/>
        <end position="344"/>
    </location>
</feature>
<feature type="transmembrane region" description="Helical" evidence="1">
    <location>
        <begin position="29"/>
        <end position="49"/>
    </location>
</feature>
<feature type="transmembrane region" description="Helical" evidence="1">
    <location>
        <begin position="75"/>
        <end position="95"/>
    </location>
</feature>
<feature type="transmembrane region" description="Helical" evidence="1">
    <location>
        <begin position="117"/>
        <end position="137"/>
    </location>
</feature>
<feature type="transmembrane region" description="Helical" evidence="1">
    <location>
        <begin position="139"/>
        <end position="159"/>
    </location>
</feature>
<feature type="transmembrane region" description="Helical" evidence="1">
    <location>
        <begin position="197"/>
        <end position="217"/>
    </location>
</feature>
<feature type="transmembrane region" description="Helical" evidence="1">
    <location>
        <begin position="230"/>
        <end position="246"/>
    </location>
</feature>
<feature type="transmembrane region" description="Helical" evidence="1">
    <location>
        <begin position="257"/>
        <end position="277"/>
    </location>
</feature>
<feature type="transmembrane region" description="Helical" evidence="1">
    <location>
        <begin position="282"/>
        <end position="302"/>
    </location>
</feature>
<feature type="region of interest" description="Disordered" evidence="2">
    <location>
        <begin position="317"/>
        <end position="344"/>
    </location>
</feature>
<feature type="compositionally biased region" description="Basic and acidic residues" evidence="2">
    <location>
        <begin position="329"/>
        <end position="344"/>
    </location>
</feature>
<comment type="subcellular location">
    <subcellularLocation>
        <location evidence="3">Membrane</location>
        <topology evidence="3">Multi-pass membrane protein</topology>
    </subcellularLocation>
</comment>
<comment type="similarity">
    <text evidence="3">Belongs to the TMEM82 family.</text>
</comment>
<sequence>MGLISYFASFLPDVPWHFWGSVDSLLQGLVGACAVSVLYNLMKVHLYIVCLNDPDKQKEAAQLRAQSPIMDFLHLSLLSLLFSLLGPRVGALVVLEFSLRAVSMVLSANKGAQSSQLFLLCQFSLGCGVSCSLDYLHEGAPHRTWNLLLAVGLSGLILWQSRRMCRHVGILYQLHSGERYCGVCLSLLACWRDIPPFLWRALKVAFWVSDLAAVAVINRDFLSTSEAMRFWTPLTICYTLLVIYMQEEQHQNPSEQMAYQTVFVRMGGLLILMMTVGRWADILHIFISLTGELWCLLHAGVMLRLCREQDFAERMSNPRKYPVSRAPKSTREGRTLQRETSLEE</sequence>
<keyword id="KW-0472">Membrane</keyword>
<keyword id="KW-1185">Reference proteome</keyword>
<keyword id="KW-0812">Transmembrane</keyword>
<keyword id="KW-1133">Transmembrane helix</keyword>
<name>TMM82_XENTR</name>
<organism>
    <name type="scientific">Xenopus tropicalis</name>
    <name type="common">Western clawed frog</name>
    <name type="synonym">Silurana tropicalis</name>
    <dbReference type="NCBI Taxonomy" id="8364"/>
    <lineage>
        <taxon>Eukaryota</taxon>
        <taxon>Metazoa</taxon>
        <taxon>Chordata</taxon>
        <taxon>Craniata</taxon>
        <taxon>Vertebrata</taxon>
        <taxon>Euteleostomi</taxon>
        <taxon>Amphibia</taxon>
        <taxon>Batrachia</taxon>
        <taxon>Anura</taxon>
        <taxon>Pipoidea</taxon>
        <taxon>Pipidae</taxon>
        <taxon>Xenopodinae</taxon>
        <taxon>Xenopus</taxon>
        <taxon>Silurana</taxon>
    </lineage>
</organism>
<proteinExistence type="evidence at transcript level"/>
<protein>
    <recommendedName>
        <fullName>Transmembrane protein 82</fullName>
    </recommendedName>
</protein>
<evidence type="ECO:0000255" key="1"/>
<evidence type="ECO:0000256" key="2">
    <source>
        <dbReference type="SAM" id="MobiDB-lite"/>
    </source>
</evidence>
<evidence type="ECO:0000305" key="3"/>